<reference key="1">
    <citation type="journal article" date="2002" name="Proc. Natl. Acad. Sci. U.S.A.">
        <title>Extensive mosaic structure revealed by the complete genome sequence of uropathogenic Escherichia coli.</title>
        <authorList>
            <person name="Welch R.A."/>
            <person name="Burland V."/>
            <person name="Plunkett G. III"/>
            <person name="Redford P."/>
            <person name="Roesch P."/>
            <person name="Rasko D."/>
            <person name="Buckles E.L."/>
            <person name="Liou S.-R."/>
            <person name="Boutin A."/>
            <person name="Hackett J."/>
            <person name="Stroud D."/>
            <person name="Mayhew G.F."/>
            <person name="Rose D.J."/>
            <person name="Zhou S."/>
            <person name="Schwartz D.C."/>
            <person name="Perna N.T."/>
            <person name="Mobley H.L.T."/>
            <person name="Donnenberg M.S."/>
            <person name="Blattner F.R."/>
        </authorList>
    </citation>
    <scope>NUCLEOTIDE SEQUENCE [LARGE SCALE GENOMIC DNA]</scope>
    <source>
        <strain>CFT073 / ATCC 700928 / UPEC</strain>
    </source>
</reference>
<gene>
    <name type="primary">ychH</name>
    <name type="ordered locus">c1663</name>
</gene>
<dbReference type="EMBL" id="AE014075">
    <property type="protein sequence ID" value="AAN80128.1"/>
    <property type="molecule type" value="Genomic_DNA"/>
</dbReference>
<dbReference type="RefSeq" id="WP_000823885.1">
    <property type="nucleotide sequence ID" value="NZ_CP051263.1"/>
</dbReference>
<dbReference type="STRING" id="199310.c1663"/>
<dbReference type="GeneID" id="93775270"/>
<dbReference type="KEGG" id="ecc:c1663"/>
<dbReference type="eggNOG" id="ENOG5032TWR">
    <property type="taxonomic scope" value="Bacteria"/>
</dbReference>
<dbReference type="HOGENOM" id="CLU_187796_0_0_6"/>
<dbReference type="BioCyc" id="ECOL199310:C1663-MONOMER"/>
<dbReference type="Proteomes" id="UP000001410">
    <property type="component" value="Chromosome"/>
</dbReference>
<dbReference type="InterPro" id="IPR019698">
    <property type="entry name" value="DUF2583"/>
</dbReference>
<dbReference type="NCBIfam" id="NF007968">
    <property type="entry name" value="PRK10692.1"/>
    <property type="match status" value="1"/>
</dbReference>
<dbReference type="Pfam" id="PF10762">
    <property type="entry name" value="DUF2583"/>
    <property type="match status" value="1"/>
</dbReference>
<feature type="chain" id="PRO_0000168869" description="Uncharacterized protein YchH">
    <location>
        <begin position="1"/>
        <end position="92"/>
    </location>
</feature>
<organism>
    <name type="scientific">Escherichia coli O6:H1 (strain CFT073 / ATCC 700928 / UPEC)</name>
    <dbReference type="NCBI Taxonomy" id="199310"/>
    <lineage>
        <taxon>Bacteria</taxon>
        <taxon>Pseudomonadati</taxon>
        <taxon>Pseudomonadota</taxon>
        <taxon>Gammaproteobacteria</taxon>
        <taxon>Enterobacterales</taxon>
        <taxon>Enterobacteriaceae</taxon>
        <taxon>Escherichia</taxon>
    </lineage>
</organism>
<keyword id="KW-1185">Reference proteome</keyword>
<proteinExistence type="predicted"/>
<name>YCHH_ECOL6</name>
<accession>P0AB50</accession>
<accession>P31807</accession>
<protein>
    <recommendedName>
        <fullName>Uncharacterized protein YchH</fullName>
    </recommendedName>
</protein>
<sequence>MKRKNASLLGNVLMGLGLVVMVVGVGYSILNQLPQFNMPQYFAHGAVLSIFVGAILWLAGARVGGHEQVCDRYWWVRHYDKRCRRSDNRRHS</sequence>